<name>K1C25_HUMAN</name>
<gene>
    <name evidence="13" type="primary">KRT25</name>
    <name evidence="11" type="synonym">KRT25A</name>
</gene>
<feature type="chain" id="PRO_0000312691" description="Keratin, type I cytoskeletal 25">
    <location>
        <begin position="1"/>
        <end position="450"/>
    </location>
</feature>
<feature type="domain" description="IF rod" evidence="3">
    <location>
        <begin position="79"/>
        <end position="394"/>
    </location>
</feature>
<feature type="region of interest" description="Head" evidence="2">
    <location>
        <begin position="1"/>
        <end position="78"/>
    </location>
</feature>
<feature type="region of interest" description="Disordered" evidence="4">
    <location>
        <begin position="1"/>
        <end position="20"/>
    </location>
</feature>
<feature type="region of interest" description="Coil 1A" evidence="2">
    <location>
        <begin position="79"/>
        <end position="114"/>
    </location>
</feature>
<feature type="region of interest" description="Linker 1" evidence="2">
    <location>
        <begin position="115"/>
        <end position="136"/>
    </location>
</feature>
<feature type="region of interest" description="Coil 1B" evidence="2">
    <location>
        <begin position="137"/>
        <end position="228"/>
    </location>
</feature>
<feature type="region of interest" description="Linker 12" evidence="2">
    <location>
        <begin position="229"/>
        <end position="251"/>
    </location>
</feature>
<feature type="region of interest" description="Coil 2" evidence="2">
    <location>
        <begin position="252"/>
        <end position="390"/>
    </location>
</feature>
<feature type="region of interest" description="Tail" evidence="2">
    <location>
        <begin position="391"/>
        <end position="450"/>
    </location>
</feature>
<feature type="compositionally biased region" description="Low complexity" evidence="4">
    <location>
        <begin position="1"/>
        <end position="11"/>
    </location>
</feature>
<feature type="modified residue" description="Phosphoserine" evidence="14">
    <location>
        <position position="442"/>
    </location>
</feature>
<feature type="sequence variant" id="VAR_049786" description="In dbSNP:rs12951399.">
    <original>S</original>
    <variation>L</variation>
    <location>
        <position position="54"/>
    </location>
</feature>
<feature type="sequence variant" id="VAR_076303" description="In ARWH3; reduces keratin intermediate filamen formation; impairs cytoskeleton assembly; dbSNP:rs879253749." evidence="8">
    <original>V</original>
    <variation>L</variation>
    <location>
        <position position="238"/>
    </location>
</feature>
<feature type="sequence variant" id="VAR_076304" description="In ARWH3; dbSNP:rs766783183." evidence="7">
    <original>L</original>
    <variation>P</variation>
    <location>
        <position position="317"/>
    </location>
</feature>
<feature type="sequence variant" id="VAR_079711" description="In ARWH3; disruption of keratin intermediate filament formation formed via heterodimerization with KRT5." evidence="9">
    <original>L</original>
    <variation>R</variation>
    <location>
        <position position="376"/>
    </location>
</feature>
<proteinExistence type="evidence at protein level"/>
<protein>
    <recommendedName>
        <fullName>Keratin, type I cytoskeletal 25</fullName>
    </recommendedName>
    <alternativeName>
        <fullName>Cytokeratin-25</fullName>
        <shortName>CK-25</shortName>
    </alternativeName>
    <alternativeName>
        <fullName>Keratin-25</fullName>
        <shortName>K25</shortName>
    </alternativeName>
    <alternativeName>
        <fullName>Keratin-25A</fullName>
        <shortName>K25A</shortName>
    </alternativeName>
    <alternativeName>
        <fullName>Type I inner root sheath-specific keratin-K25irs1</fullName>
    </alternativeName>
</protein>
<accession>Q7Z3Z0</accession>
<evidence type="ECO:0000250" key="1">
    <source>
        <dbReference type="UniProtKB" id="Q8VCW2"/>
    </source>
</evidence>
<evidence type="ECO:0000255" key="2"/>
<evidence type="ECO:0000255" key="3">
    <source>
        <dbReference type="PROSITE-ProRule" id="PRU01188"/>
    </source>
</evidence>
<evidence type="ECO:0000256" key="4">
    <source>
        <dbReference type="SAM" id="MobiDB-lite"/>
    </source>
</evidence>
<evidence type="ECO:0000269" key="5">
    <source>
    </source>
</evidence>
<evidence type="ECO:0000269" key="6">
    <source>
    </source>
</evidence>
<evidence type="ECO:0000269" key="7">
    <source>
    </source>
</evidence>
<evidence type="ECO:0000269" key="8">
    <source>
    </source>
</evidence>
<evidence type="ECO:0000269" key="9">
    <source>
    </source>
</evidence>
<evidence type="ECO:0000305" key="10"/>
<evidence type="ECO:0000312" key="11">
    <source>
        <dbReference type="EMBL" id="CAD91904.1"/>
    </source>
</evidence>
<evidence type="ECO:0000312" key="12">
    <source>
        <dbReference type="EMBL" id="EAW60676.1"/>
    </source>
</evidence>
<evidence type="ECO:0000312" key="13">
    <source>
        <dbReference type="HGNC" id="HGNC:30839"/>
    </source>
</evidence>
<evidence type="ECO:0007744" key="14">
    <source>
    </source>
</evidence>
<sequence length="450" mass="49318">MSLRLSSASRRSCPRPTTGSLRLYGGGTSFGTGNSCGISGIGSGFSSAFGGSSSGGNTGGGNPCAGFTVNERGLLSGNEKVTMQNLNDRLASYLDSVHALEEANADLEQKIKGWYEKFGPGSCRGLDHDYSRYFPIIDDLKNQIIASTTSNANAVLQIDNARLTADDFRLKYENELALHQSVEADVNGLRRVLDEITLCRTDLEIQYETLSEEMTYLKKNHKEEMQVLQCAAGGNVNVEMNAAPGVDLTVLLNNMRAEYEALAEQNRRDAEAWFNEKSASLQQQISEDVGATTSARNELTEMKRTLQTLEIELQSLLATKHSLECSLTETESNYCAQLAQIQAQIGALEEQLHQVRTETEGQKLEYEQLLDIKLHLEKEIETYCLLIGGDDGACKSGGYKSKDYGSGNVGSQVKDPAKAIVVKKVLEEVDQRSKILTTRLHSLEEKSQSN</sequence>
<comment type="function">
    <text evidence="1 8">Essential for the proper assembly of type I and type II keratin protein complexes and formation of keratin intermediate filaments in the inner root sheath (irs) (By similarity). Plays a role in the cytoskeleton organization (PubMed:26902920).</text>
</comment>
<comment type="subunit">
    <text evidence="1 8 9 10">Heterodimer of a type I and a type II keratin (PubMed:26902920). Heterodimer with type II keratin KRT5 leading to the formation of keratin intermediate filament (KIF) network (PubMed:28899683). Interacts with KRT6A to form filaments (By similarity).</text>
</comment>
<comment type="interaction">
    <interactant intactId="EBI-11980019">
        <id>Q7Z3Z0</id>
    </interactant>
    <interactant intactId="EBI-740220">
        <id>O14964</id>
        <label>HGS</label>
    </interactant>
    <organismsDiffer>false</organismsDiffer>
    <experiments>3</experiments>
</comment>
<comment type="interaction">
    <interactant intactId="EBI-11980019">
        <id>Q7Z3Z0</id>
    </interactant>
    <interactant intactId="EBI-298429">
        <id>P04264</id>
        <label>KRT1</label>
    </interactant>
    <organismsDiffer>false</organismsDiffer>
    <experiments>3</experiments>
</comment>
<comment type="interaction">
    <interactant intactId="EBI-11980019">
        <id>Q7Z3Z0</id>
    </interactant>
    <interactant intactId="EBI-1247312">
        <id>P35908</id>
        <label>KRT2</label>
    </interactant>
    <organismsDiffer>false</organismsDiffer>
    <experiments>5</experiments>
</comment>
<comment type="interaction">
    <interactant intactId="EBI-11980019">
        <id>Q7Z3Z0</id>
    </interactant>
    <interactant intactId="EBI-2430095">
        <id>P12035</id>
        <label>KRT3</label>
    </interactant>
    <organismsDiffer>false</organismsDiffer>
    <experiments>3</experiments>
</comment>
<comment type="interaction">
    <interactant intactId="EBI-11980019">
        <id>Q7Z3Z0</id>
    </interactant>
    <interactant intactId="EBI-2371606">
        <id>P19013</id>
        <label>KRT4</label>
    </interactant>
    <organismsDiffer>false</organismsDiffer>
    <experiments>3</experiments>
</comment>
<comment type="interaction">
    <interactant intactId="EBI-11980019">
        <id>Q7Z3Z0</id>
    </interactant>
    <interactant intactId="EBI-702187">
        <id>P13647</id>
        <label>KRT5</label>
    </interactant>
    <organismsDiffer>false</organismsDiffer>
    <experiments>3</experiments>
</comment>
<comment type="interaction">
    <interactant intactId="EBI-11980019">
        <id>Q7Z3Z0</id>
    </interactant>
    <interactant intactId="EBI-702198">
        <id>P02538</id>
        <label>KRT6A</label>
    </interactant>
    <organismsDiffer>false</organismsDiffer>
    <experiments>3</experiments>
</comment>
<comment type="interaction">
    <interactant intactId="EBI-11980019">
        <id>Q7Z3Z0</id>
    </interactant>
    <interactant intactId="EBI-740907">
        <id>P04259</id>
        <label>KRT6B</label>
    </interactant>
    <organismsDiffer>false</organismsDiffer>
    <experiments>3</experiments>
</comment>
<comment type="interaction">
    <interactant intactId="EBI-11980019">
        <id>Q7Z3Z0</id>
    </interactant>
    <interactant intactId="EBI-2564105">
        <id>P48668</id>
        <label>KRT6C</label>
    </interactant>
    <organismsDiffer>false</organismsDiffer>
    <experiments>3</experiments>
</comment>
<comment type="interaction">
    <interactant intactId="EBI-11980019">
        <id>Q7Z3Z0</id>
    </interactant>
    <interactant intactId="EBI-2952676">
        <id>Q3SY84</id>
        <label>KRT71</label>
    </interactant>
    <organismsDiffer>false</organismsDiffer>
    <experiments>5</experiments>
</comment>
<comment type="interaction">
    <interactant intactId="EBI-11980019">
        <id>Q7Z3Z0</id>
    </interactant>
    <interactant intactId="EBI-1221280">
        <id>Q14CN4</id>
        <label>KRT72</label>
    </interactant>
    <organismsDiffer>false</organismsDiffer>
    <experiments>3</experiments>
</comment>
<comment type="interaction">
    <interactant intactId="EBI-11980019">
        <id>Q7Z3Z0</id>
    </interactant>
    <interactant intactId="EBI-968660">
        <id>Q7RTS7</id>
        <label>KRT74</label>
    </interactant>
    <organismsDiffer>false</organismsDiffer>
    <experiments>5</experiments>
</comment>
<comment type="interaction">
    <interactant intactId="EBI-11980019">
        <id>Q7Z3Z0</id>
    </interactant>
    <interactant intactId="EBI-2949715">
        <id>O95678</id>
        <label>KRT75</label>
    </interactant>
    <organismsDiffer>false</organismsDiffer>
    <experiments>3</experiments>
</comment>
<comment type="interaction">
    <interactant intactId="EBI-11980019">
        <id>Q7Z3Z0</id>
    </interactant>
    <interactant intactId="EBI-2952745">
        <id>Q01546</id>
        <label>KRT76</label>
    </interactant>
    <organismsDiffer>false</organismsDiffer>
    <experiments>3</experiments>
</comment>
<comment type="interaction">
    <interactant intactId="EBI-11980019">
        <id>Q7Z3Z0</id>
    </interactant>
    <interactant intactId="EBI-1056564">
        <id>Q8N1N4</id>
        <label>KRT78</label>
    </interactant>
    <organismsDiffer>false</organismsDiffer>
    <experiments>3</experiments>
</comment>
<comment type="interaction">
    <interactant intactId="EBI-11980019">
        <id>Q7Z3Z0</id>
    </interactant>
    <interactant intactId="EBI-2514135">
        <id>Q5XKE5</id>
        <label>KRT79</label>
    </interactant>
    <organismsDiffer>false</organismsDiffer>
    <experiments>3</experiments>
</comment>
<comment type="interaction">
    <interactant intactId="EBI-11980019">
        <id>Q7Z3Z0</id>
    </interactant>
    <interactant intactId="EBI-297852">
        <id>P05787</id>
        <label>KRT8</label>
    </interactant>
    <organismsDiffer>false</organismsDiffer>
    <experiments>3</experiments>
</comment>
<comment type="interaction">
    <interactant intactId="EBI-11980019">
        <id>Q7Z3Z0</id>
    </interactant>
    <interactant intactId="EBI-10221390">
        <id>P78385</id>
        <label>KRT83</label>
    </interactant>
    <organismsDiffer>false</organismsDiffer>
    <experiments>3</experiments>
</comment>
<comment type="interaction">
    <interactant intactId="EBI-11980019">
        <id>Q7Z3Z0</id>
    </interactant>
    <interactant intactId="EBI-1049371">
        <id>P78386</id>
        <label>KRT85</label>
    </interactant>
    <organismsDiffer>false</organismsDiffer>
    <experiments>5</experiments>
</comment>
<comment type="interaction">
    <interactant intactId="EBI-11980019">
        <id>Q7Z3Z0</id>
    </interactant>
    <interactant intactId="EBI-9996498">
        <id>O43790</id>
        <label>KRT86</label>
    </interactant>
    <organismsDiffer>false</organismsDiffer>
    <experiments>3</experiments>
</comment>
<comment type="interaction">
    <interactant intactId="EBI-11980019">
        <id>Q7Z3Z0</id>
    </interactant>
    <interactant intactId="EBI-10269566">
        <id>Q8NDC4</id>
        <label>MORN4</label>
    </interactant>
    <organismsDiffer>false</organismsDiffer>
    <experiments>3</experiments>
</comment>
<comment type="interaction">
    <interactant intactId="EBI-11980019">
        <id>Q7Z3Z0</id>
    </interactant>
    <interactant intactId="EBI-368321">
        <id>O60437</id>
        <label>PPL</label>
    </interactant>
    <organismsDiffer>false</organismsDiffer>
    <experiments>3</experiments>
</comment>
<comment type="subcellular location">
    <subcellularLocation>
        <location evidence="1">Cytoplasm</location>
    </subcellularLocation>
</comment>
<comment type="tissue specificity">
    <text evidence="5 6">Strongly expressed in skin and scalp, and weak expression observed in thymus and tongue. In the hair follicle, expressed in Henle layer, Huxley layer and in the inner root sheath cuticle of the hair follicle. Expression extends from the bulb region up to the point of differentiation into the three layers. Also present in the medulla of beard hair (at protein level).</text>
</comment>
<comment type="disease" evidence="7 8 9">
    <disease id="DI-04638">
        <name>Woolly hair autosomal recessive 3</name>
        <acronym>ARWH3</acronym>
        <description>A hair shaft disorder characterized by fine and tightly curled hair. Compared to normal curly hair that is observed in some populations, woolly hair grows slowly and stops growing after a few inches. Under light microscopy, woolly hair shows some structural anomalies, including trichorrhexis nodosa and tapered ends. Some individuals may present with hypotrichosis.</description>
        <dbReference type="MIM" id="616760"/>
    </disease>
    <text>The disease is caused by variants affecting the gene represented in this entry.</text>
</comment>
<comment type="miscellaneous">
    <text evidence="10">There are two types of cytoskeletal and microfibrillar keratin: I (acidic; 40-55 kDa) and II (neutral to basic; 56-70 kDa).</text>
</comment>
<comment type="similarity">
    <text evidence="3">Belongs to the intermediate filament family.</text>
</comment>
<reference evidence="10 11" key="1">
    <citation type="journal article" date="2004" name="Differentiation">
        <title>The human type I keratin gene family: characterization of new hair follicle specific members and evaluation of the chromosome 17q21.2 gene domain.</title>
        <authorList>
            <person name="Rogers M.A."/>
            <person name="Winter H."/>
            <person name="Langbein L."/>
            <person name="Bleiler R."/>
            <person name="Schweizer J."/>
        </authorList>
    </citation>
    <scope>NUCLEOTIDE SEQUENCE [MRNA]</scope>
    <scope>TISSUE SPECIFICITY</scope>
    <source>
        <tissue evidence="11">Scalp</tissue>
    </source>
</reference>
<reference evidence="12" key="2">
    <citation type="submission" date="2005-07" db="EMBL/GenBank/DDBJ databases">
        <authorList>
            <person name="Mural R.J."/>
            <person name="Istrail S."/>
            <person name="Sutton G.G."/>
            <person name="Florea L."/>
            <person name="Halpern A.L."/>
            <person name="Mobarry C.M."/>
            <person name="Lippert R."/>
            <person name="Walenz B."/>
            <person name="Shatkay H."/>
            <person name="Dew I."/>
            <person name="Miller J.R."/>
            <person name="Flanigan M.J."/>
            <person name="Edwards N.J."/>
            <person name="Bolanos R."/>
            <person name="Fasulo D."/>
            <person name="Halldorsson B.V."/>
            <person name="Hannenhalli S."/>
            <person name="Turner R."/>
            <person name="Yooseph S."/>
            <person name="Lu F."/>
            <person name="Nusskern D.R."/>
            <person name="Shue B.C."/>
            <person name="Zheng X.H."/>
            <person name="Zhong F."/>
            <person name="Delcher A.L."/>
            <person name="Huson D.H."/>
            <person name="Kravitz S.A."/>
            <person name="Mouchard L."/>
            <person name="Reinert K."/>
            <person name="Remington K.A."/>
            <person name="Clark A.G."/>
            <person name="Waterman M.S."/>
            <person name="Eichler E.E."/>
            <person name="Adams M.D."/>
            <person name="Hunkapiller M.W."/>
            <person name="Myers E.W."/>
            <person name="Venter J.C."/>
        </authorList>
    </citation>
    <scope>NUCLEOTIDE SEQUENCE [LARGE SCALE GENOMIC DNA]</scope>
</reference>
<reference evidence="10" key="3">
    <citation type="journal article" date="2006" name="J. Invest. Dermatol.">
        <title>K25 (K25irs1), K26 (K25irs2), K27 (K25irs3), and K28 (K25irs4) represent the type I inner root sheath keratins of the human hair follicle.</title>
        <authorList>
            <person name="Langbein L."/>
            <person name="Rogers M.A."/>
            <person name="Praetzel-Wunder S."/>
            <person name="Helmke B."/>
            <person name="Schirmacher P."/>
            <person name="Schweizer J."/>
        </authorList>
    </citation>
    <scope>TISSUE SPECIFICITY</scope>
</reference>
<reference key="4">
    <citation type="journal article" date="2008" name="Proc. Natl. Acad. Sci. U.S.A.">
        <title>A quantitative atlas of mitotic phosphorylation.</title>
        <authorList>
            <person name="Dephoure N."/>
            <person name="Zhou C."/>
            <person name="Villen J."/>
            <person name="Beausoleil S.A."/>
            <person name="Bakalarski C.E."/>
            <person name="Elledge S.J."/>
            <person name="Gygi S.P."/>
        </authorList>
    </citation>
    <scope>PHOSPHORYLATION [LARGE SCALE ANALYSIS] AT SER-442</scope>
    <scope>IDENTIFICATION BY MASS SPECTROMETRY [LARGE SCALE ANALYSIS]</scope>
    <source>
        <tissue>Cervix carcinoma</tissue>
    </source>
</reference>
<reference key="5">
    <citation type="journal article" date="2015" name="J. Med. Genet.">
        <title>A homozygous missense variant in type I keratin KRT25 causes autosomal recessive woolly hair.</title>
        <authorList>
            <person name="Ansar M."/>
            <person name="Raza S.I."/>
            <person name="Lee K."/>
            <person name="Irfanullah X."/>
            <person name="Shahi S."/>
            <person name="Acharya A."/>
            <person name="Dai H."/>
            <person name="Smith J.D."/>
            <person name="Shendure J."/>
            <person name="Bamshad M.J."/>
            <person name="Nickerson D.A."/>
            <person name="Santos-Cortez R.L."/>
            <person name="Ahmad W."/>
            <person name="Leal S.M."/>
        </authorList>
    </citation>
    <scope>VARIANT ARWH3 PRO-317</scope>
</reference>
<reference key="6">
    <citation type="journal article" date="2016" name="J. Invest. Dermatol.">
        <title>Autosomal recessive hypotrichosis with woolly hair caused by a mutation in the keratin 25 gene expressed in hair follicles.</title>
        <authorList>
            <person name="Zernov N.V."/>
            <person name="Skoblov M.Y."/>
            <person name="Marakhonov A.V."/>
            <person name="Shimomura Y."/>
            <person name="Vasilyeva T.A."/>
            <person name="Konovalov F.A."/>
            <person name="Abrukova A.V."/>
            <person name="Zinchenko R.A."/>
        </authorList>
    </citation>
    <scope>VARIANT ARWH3 LEU-238</scope>
    <scope>CHARACTERIZATION OF VARIANT ARWH3 LEU-238</scope>
    <scope>FUNCTION</scope>
    <scope>SUBUNIT</scope>
</reference>
<reference key="7">
    <citation type="journal article" date="2018" name="J. Invest. Dermatol.">
        <title>A missense mutation within the helix termination motif of KRT25 causes autosomal dominant woolly hair/hypotrichosis.</title>
        <authorList>
            <person name="Yu X."/>
            <person name="Chen F."/>
            <person name="Ni C."/>
            <person name="Zhang G."/>
            <person name="Zheng L."/>
            <person name="Zhang J."/>
            <person name="Li C."/>
            <person name="Sandilands A."/>
            <person name="Yao Z."/>
            <person name="Li M."/>
        </authorList>
    </citation>
    <scope>VARIANT ARWH3 ARG-376</scope>
    <scope>CHARACTERIZATION OF VARIANT ARWH3 ARG-376</scope>
    <scope>SUBUNIT</scope>
</reference>
<dbReference type="EMBL" id="AJ564204">
    <property type="protein sequence ID" value="CAD91904.1"/>
    <property type="molecule type" value="mRNA"/>
</dbReference>
<dbReference type="EMBL" id="CH471152">
    <property type="protein sequence ID" value="EAW60676.1"/>
    <property type="molecule type" value="Genomic_DNA"/>
</dbReference>
<dbReference type="CCDS" id="CCDS11373.1"/>
<dbReference type="RefSeq" id="NP_853512.1">
    <property type="nucleotide sequence ID" value="NM_181534.4"/>
</dbReference>
<dbReference type="SMR" id="Q7Z3Z0"/>
<dbReference type="BioGRID" id="127044">
    <property type="interactions" value="34"/>
</dbReference>
<dbReference type="ComplexPortal" id="CPX-5665">
    <property type="entry name" value="Keratin-25 - Keratin-71 dimer complex"/>
</dbReference>
<dbReference type="FunCoup" id="Q7Z3Z0">
    <property type="interactions" value="155"/>
</dbReference>
<dbReference type="IntAct" id="Q7Z3Z0">
    <property type="interactions" value="22"/>
</dbReference>
<dbReference type="STRING" id="9606.ENSP00000310573"/>
<dbReference type="GlyGen" id="Q7Z3Z0">
    <property type="glycosylation" value="2 sites, 1 O-linked glycan (1 site)"/>
</dbReference>
<dbReference type="iPTMnet" id="Q7Z3Z0"/>
<dbReference type="PhosphoSitePlus" id="Q7Z3Z0"/>
<dbReference type="SwissPalm" id="Q7Z3Z0"/>
<dbReference type="BioMuta" id="KRT25"/>
<dbReference type="DMDM" id="74723316"/>
<dbReference type="jPOST" id="Q7Z3Z0"/>
<dbReference type="MassIVE" id="Q7Z3Z0"/>
<dbReference type="PaxDb" id="9606-ENSP00000310573"/>
<dbReference type="PeptideAtlas" id="Q7Z3Z0"/>
<dbReference type="ProteomicsDB" id="69098"/>
<dbReference type="Antibodypedia" id="57604">
    <property type="antibodies" value="99 antibodies from 18 providers"/>
</dbReference>
<dbReference type="DNASU" id="147183"/>
<dbReference type="Ensembl" id="ENST00000312150.5">
    <property type="protein sequence ID" value="ENSP00000310573.4"/>
    <property type="gene ID" value="ENSG00000204897.7"/>
</dbReference>
<dbReference type="GeneID" id="147183"/>
<dbReference type="KEGG" id="hsa:147183"/>
<dbReference type="MANE-Select" id="ENST00000312150.5">
    <property type="protein sequence ID" value="ENSP00000310573.4"/>
    <property type="RefSeq nucleotide sequence ID" value="NM_181534.4"/>
    <property type="RefSeq protein sequence ID" value="NP_853512.1"/>
</dbReference>
<dbReference type="UCSC" id="uc002hve.3">
    <property type="organism name" value="human"/>
</dbReference>
<dbReference type="AGR" id="HGNC:30839"/>
<dbReference type="CTD" id="147183"/>
<dbReference type="DisGeNET" id="147183"/>
<dbReference type="GeneCards" id="KRT25"/>
<dbReference type="HGNC" id="HGNC:30839">
    <property type="gene designation" value="KRT25"/>
</dbReference>
<dbReference type="HPA" id="ENSG00000204897">
    <property type="expression patterns" value="Tissue enriched (skin)"/>
</dbReference>
<dbReference type="MalaCards" id="KRT25"/>
<dbReference type="MIM" id="616646">
    <property type="type" value="gene"/>
</dbReference>
<dbReference type="MIM" id="616760">
    <property type="type" value="phenotype"/>
</dbReference>
<dbReference type="neXtProt" id="NX_Q7Z3Z0"/>
<dbReference type="OpenTargets" id="ENSG00000204897"/>
<dbReference type="Orphanet" id="170">
    <property type="disease" value="Woolly hair"/>
</dbReference>
<dbReference type="PharmGKB" id="PA134977088"/>
<dbReference type="VEuPathDB" id="HostDB:ENSG00000204897"/>
<dbReference type="eggNOG" id="ENOG502SKJN">
    <property type="taxonomic scope" value="Eukaryota"/>
</dbReference>
<dbReference type="GeneTree" id="ENSGT00940000161994"/>
<dbReference type="HOGENOM" id="CLU_012560_8_3_1"/>
<dbReference type="InParanoid" id="Q7Z3Z0"/>
<dbReference type="OMA" id="TGNSCGI"/>
<dbReference type="OrthoDB" id="2441647at2759"/>
<dbReference type="PAN-GO" id="Q7Z3Z0">
    <property type="GO annotations" value="3 GO annotations based on evolutionary models"/>
</dbReference>
<dbReference type="PhylomeDB" id="Q7Z3Z0"/>
<dbReference type="TreeFam" id="TF332742"/>
<dbReference type="PathwayCommons" id="Q7Z3Z0"/>
<dbReference type="Reactome" id="R-HSA-6805567">
    <property type="pathway name" value="Keratinization"/>
</dbReference>
<dbReference type="Reactome" id="R-HSA-6809371">
    <property type="pathway name" value="Formation of the cornified envelope"/>
</dbReference>
<dbReference type="SignaLink" id="Q7Z3Z0"/>
<dbReference type="BioGRID-ORCS" id="147183">
    <property type="hits" value="12 hits in 1140 CRISPR screens"/>
</dbReference>
<dbReference type="GenomeRNAi" id="147183"/>
<dbReference type="Pharos" id="Q7Z3Z0">
    <property type="development level" value="Tbio"/>
</dbReference>
<dbReference type="PRO" id="PR:Q7Z3Z0"/>
<dbReference type="Proteomes" id="UP000005640">
    <property type="component" value="Chromosome 17"/>
</dbReference>
<dbReference type="RNAct" id="Q7Z3Z0">
    <property type="molecule type" value="protein"/>
</dbReference>
<dbReference type="Bgee" id="ENSG00000204897">
    <property type="expression patterns" value="Expressed in upper arm skin and 57 other cell types or tissues"/>
</dbReference>
<dbReference type="GO" id="GO:0005856">
    <property type="term" value="C:cytoskeleton"/>
    <property type="evidence" value="ECO:0000318"/>
    <property type="project" value="GO_Central"/>
</dbReference>
<dbReference type="GO" id="GO:0005829">
    <property type="term" value="C:cytosol"/>
    <property type="evidence" value="ECO:0000304"/>
    <property type="project" value="Reactome"/>
</dbReference>
<dbReference type="GO" id="GO:0070062">
    <property type="term" value="C:extracellular exosome"/>
    <property type="evidence" value="ECO:0007005"/>
    <property type="project" value="UniProtKB"/>
</dbReference>
<dbReference type="GO" id="GO:0045095">
    <property type="term" value="C:keratin filament"/>
    <property type="evidence" value="ECO:0000353"/>
    <property type="project" value="ComplexPortal"/>
</dbReference>
<dbReference type="GO" id="GO:0046982">
    <property type="term" value="F:protein heterodimerization activity"/>
    <property type="evidence" value="ECO:0000314"/>
    <property type="project" value="UniProtKB"/>
</dbReference>
<dbReference type="GO" id="GO:0005198">
    <property type="term" value="F:structural molecule activity"/>
    <property type="evidence" value="ECO:0007669"/>
    <property type="project" value="InterPro"/>
</dbReference>
<dbReference type="GO" id="GO:0007010">
    <property type="term" value="P:cytoskeleton organization"/>
    <property type="evidence" value="ECO:0000314"/>
    <property type="project" value="UniProtKB"/>
</dbReference>
<dbReference type="GO" id="GO:0030855">
    <property type="term" value="P:epithelial cell differentiation"/>
    <property type="evidence" value="ECO:0000318"/>
    <property type="project" value="GO_Central"/>
</dbReference>
<dbReference type="GO" id="GO:0042633">
    <property type="term" value="P:hair cycle"/>
    <property type="evidence" value="ECO:0000314"/>
    <property type="project" value="UniProtKB"/>
</dbReference>
<dbReference type="GO" id="GO:0031069">
    <property type="term" value="P:hair follicle morphogenesis"/>
    <property type="evidence" value="ECO:0000318"/>
    <property type="project" value="GO_Central"/>
</dbReference>
<dbReference type="GO" id="GO:0045109">
    <property type="term" value="P:intermediate filament organization"/>
    <property type="evidence" value="ECO:0000318"/>
    <property type="project" value="GO_Central"/>
</dbReference>
<dbReference type="FunFam" id="1.20.5.1160:FF:000002">
    <property type="entry name" value="Type I keratin 10"/>
    <property type="match status" value="1"/>
</dbReference>
<dbReference type="FunFam" id="1.20.5.170:FF:000002">
    <property type="entry name" value="Type I keratin KA11"/>
    <property type="match status" value="1"/>
</dbReference>
<dbReference type="FunFam" id="1.20.5.500:FF:000001">
    <property type="entry name" value="Type II keratin 23"/>
    <property type="match status" value="1"/>
</dbReference>
<dbReference type="Gene3D" id="1.20.5.170">
    <property type="match status" value="1"/>
</dbReference>
<dbReference type="Gene3D" id="1.20.5.500">
    <property type="entry name" value="Single helix bin"/>
    <property type="match status" value="1"/>
</dbReference>
<dbReference type="Gene3D" id="1.20.5.1160">
    <property type="entry name" value="Vasodilator-stimulated phosphoprotein"/>
    <property type="match status" value="1"/>
</dbReference>
<dbReference type="InterPro" id="IPR039008">
    <property type="entry name" value="IF_rod_dom"/>
</dbReference>
<dbReference type="InterPro" id="IPR002957">
    <property type="entry name" value="Keratin_I"/>
</dbReference>
<dbReference type="PANTHER" id="PTHR23239">
    <property type="entry name" value="INTERMEDIATE FILAMENT"/>
    <property type="match status" value="1"/>
</dbReference>
<dbReference type="PANTHER" id="PTHR23239:SF160">
    <property type="entry name" value="KERATIN, TYPE I CYTOSKELETAL 25"/>
    <property type="match status" value="1"/>
</dbReference>
<dbReference type="Pfam" id="PF00038">
    <property type="entry name" value="Filament"/>
    <property type="match status" value="1"/>
</dbReference>
<dbReference type="PRINTS" id="PR01248">
    <property type="entry name" value="TYPE1KERATIN"/>
</dbReference>
<dbReference type="SMART" id="SM01391">
    <property type="entry name" value="Filament"/>
    <property type="match status" value="1"/>
</dbReference>
<dbReference type="SUPFAM" id="SSF64593">
    <property type="entry name" value="Intermediate filament protein, coiled coil region"/>
    <property type="match status" value="2"/>
</dbReference>
<dbReference type="PROSITE" id="PS51842">
    <property type="entry name" value="IF_ROD_2"/>
    <property type="match status" value="1"/>
</dbReference>
<keyword id="KW-0175">Coiled coil</keyword>
<keyword id="KW-0963">Cytoplasm</keyword>
<keyword id="KW-0225">Disease variant</keyword>
<keyword id="KW-1063">Hypotrichosis</keyword>
<keyword id="KW-0403">Intermediate filament</keyword>
<keyword id="KW-0416">Keratin</keyword>
<keyword id="KW-0597">Phosphoprotein</keyword>
<keyword id="KW-1267">Proteomics identification</keyword>
<keyword id="KW-1185">Reference proteome</keyword>
<organism>
    <name type="scientific">Homo sapiens</name>
    <name type="common">Human</name>
    <dbReference type="NCBI Taxonomy" id="9606"/>
    <lineage>
        <taxon>Eukaryota</taxon>
        <taxon>Metazoa</taxon>
        <taxon>Chordata</taxon>
        <taxon>Craniata</taxon>
        <taxon>Vertebrata</taxon>
        <taxon>Euteleostomi</taxon>
        <taxon>Mammalia</taxon>
        <taxon>Eutheria</taxon>
        <taxon>Euarchontoglires</taxon>
        <taxon>Primates</taxon>
        <taxon>Haplorrhini</taxon>
        <taxon>Catarrhini</taxon>
        <taxon>Hominidae</taxon>
        <taxon>Homo</taxon>
    </lineage>
</organism>